<keyword id="KW-0067">ATP-binding</keyword>
<keyword id="KW-1003">Cell membrane</keyword>
<keyword id="KW-0186">Copper</keyword>
<keyword id="KW-0187">Copper transport</keyword>
<keyword id="KW-0406">Ion transport</keyword>
<keyword id="KW-0460">Magnesium</keyword>
<keyword id="KW-0472">Membrane</keyword>
<keyword id="KW-0479">Metal-binding</keyword>
<keyword id="KW-0547">Nucleotide-binding</keyword>
<keyword id="KW-0597">Phosphoprotein</keyword>
<keyword id="KW-1278">Translocase</keyword>
<keyword id="KW-0812">Transmembrane</keyword>
<keyword id="KW-1133">Transmembrane helix</keyword>
<keyword id="KW-0813">Transport</keyword>
<comment type="function">
    <text>Probably involved in copper export.</text>
</comment>
<comment type="catalytic activity">
    <reaction>
        <text>Cu(+)(in) + ATP + H2O = Cu(+)(out) + ADP + phosphate + H(+)</text>
        <dbReference type="Rhea" id="RHEA:25792"/>
        <dbReference type="ChEBI" id="CHEBI:15377"/>
        <dbReference type="ChEBI" id="CHEBI:15378"/>
        <dbReference type="ChEBI" id="CHEBI:30616"/>
        <dbReference type="ChEBI" id="CHEBI:43474"/>
        <dbReference type="ChEBI" id="CHEBI:49552"/>
        <dbReference type="ChEBI" id="CHEBI:456216"/>
        <dbReference type="EC" id="7.2.2.8"/>
    </reaction>
</comment>
<comment type="subcellular location">
    <subcellularLocation>
        <location>Cell membrane</location>
        <topology>Multi-pass membrane protein</topology>
    </subcellularLocation>
</comment>
<comment type="similarity">
    <text evidence="4">Belongs to the cation transport ATPase (P-type) (TC 3.A.3) family. Type IB subfamily.</text>
</comment>
<reference key="1">
    <citation type="journal article" date="1998" name="J. Bacteriol.">
        <title>Properties of the P-type ATPases encoded by the copAP operons of Helicobacter pylori and Helicobacter felis.</title>
        <authorList>
            <person name="Bayle D."/>
            <person name="Waengler S."/>
            <person name="Weitzenegger T."/>
            <person name="Steinhilber W."/>
            <person name="Volz J."/>
            <person name="Przybylski M."/>
            <person name="Schaefer K.P."/>
            <person name="Sachs G."/>
            <person name="Melchers K."/>
        </authorList>
    </citation>
    <scope>NUCLEOTIDE SEQUENCE [GENOMIC DNA]</scope>
    <source>
        <strain>ATCC 49179 / CCUG 28539 / NCTC 12436 / CS1</strain>
    </source>
</reference>
<reference key="2">
    <citation type="submission" date="2010-12" db="EMBL/GenBank/DDBJ databases">
        <title>Comparative whole genome analysis of the carcinogenic bacterial pathogen Helicobacter felis.</title>
        <authorList>
            <person name="Arnold A."/>
            <person name="Zigova Z."/>
            <person name="Lawley T."/>
            <person name="Falkow S."/>
            <person name="Bentley S."/>
            <person name="Aslett M."/>
            <person name="Muller A."/>
        </authorList>
    </citation>
    <scope>NUCLEOTIDE SEQUENCE [LARGE SCALE GENOMIC DNA]</scope>
    <source>
        <strain>ATCC 49179 / CCUG 28539 / NCTC 12436 / CS1</strain>
    </source>
</reference>
<proteinExistence type="inferred from homology"/>
<feature type="chain" id="PRO_0000046169" description="Copper-transporting ATPase">
    <location>
        <begin position="1"/>
        <end position="732"/>
    </location>
</feature>
<feature type="topological domain" description="Cytoplasmic" evidence="2">
    <location>
        <begin position="1"/>
        <end position="88"/>
    </location>
</feature>
<feature type="transmembrane region" description="Helical" evidence="2">
    <location>
        <begin position="89"/>
        <end position="109"/>
    </location>
</feature>
<feature type="topological domain" description="Extracellular" evidence="2">
    <location>
        <begin position="110"/>
        <end position="122"/>
    </location>
</feature>
<feature type="transmembrane region" description="Helical" evidence="2">
    <location>
        <begin position="123"/>
        <end position="142"/>
    </location>
</feature>
<feature type="topological domain" description="Cytoplasmic" evidence="2">
    <location>
        <begin position="143"/>
        <end position="149"/>
    </location>
</feature>
<feature type="transmembrane region" description="Helical" evidence="2">
    <location>
        <begin position="150"/>
        <end position="170"/>
    </location>
</feature>
<feature type="topological domain" description="Extracellular" evidence="2">
    <location>
        <begin position="171"/>
        <end position="187"/>
    </location>
</feature>
<feature type="transmembrane region" description="Helical" evidence="2">
    <location>
        <begin position="188"/>
        <end position="208"/>
    </location>
</feature>
<feature type="topological domain" description="Cytoplasmic" evidence="2">
    <location>
        <begin position="209"/>
        <end position="336"/>
    </location>
</feature>
<feature type="transmembrane region" description="Helical" evidence="2">
    <location>
        <begin position="337"/>
        <end position="359"/>
    </location>
</feature>
<feature type="topological domain" description="Extracellular" evidence="2">
    <location>
        <begin position="360"/>
        <end position="365"/>
    </location>
</feature>
<feature type="transmembrane region" description="Helical" evidence="2">
    <location>
        <begin position="366"/>
        <end position="383"/>
    </location>
</feature>
<feature type="topological domain" description="Cytoplasmic" evidence="2">
    <location>
        <begin position="384"/>
        <end position="663"/>
    </location>
</feature>
<feature type="transmembrane region" description="Helical" evidence="2">
    <location>
        <begin position="664"/>
        <end position="683"/>
    </location>
</feature>
<feature type="topological domain" description="Extracellular" evidence="2">
    <location>
        <begin position="684"/>
        <end position="694"/>
    </location>
</feature>
<feature type="transmembrane region" description="Helical" evidence="2">
    <location>
        <begin position="695"/>
        <end position="713"/>
    </location>
</feature>
<feature type="topological domain" description="Cytoplasmic" evidence="2">
    <location>
        <begin position="714"/>
        <end position="732"/>
    </location>
</feature>
<feature type="domain" description="HMA" evidence="3">
    <location>
        <begin position="2"/>
        <end position="68"/>
    </location>
</feature>
<feature type="active site" description="4-aspartylphosphate intermediate" evidence="1">
    <location>
        <position position="421"/>
    </location>
</feature>
<feature type="binding site" evidence="3">
    <location>
        <position position="13"/>
    </location>
    <ligand>
        <name>Cu(+)</name>
        <dbReference type="ChEBI" id="CHEBI:49552"/>
    </ligand>
</feature>
<feature type="binding site" evidence="3">
    <location>
        <position position="16"/>
    </location>
    <ligand>
        <name>Cu(+)</name>
        <dbReference type="ChEBI" id="CHEBI:49552"/>
    </ligand>
</feature>
<feature type="binding site">
    <location>
        <position position="609"/>
    </location>
    <ligand>
        <name>Mg(2+)</name>
        <dbReference type="ChEBI" id="CHEBI:18420"/>
    </ligand>
</feature>
<feature type="binding site">
    <location>
        <position position="613"/>
    </location>
    <ligand>
        <name>Mg(2+)</name>
        <dbReference type="ChEBI" id="CHEBI:18420"/>
    </ligand>
</feature>
<dbReference type="EC" id="7.2.2.8"/>
<dbReference type="EMBL" id="AJ001932">
    <property type="protein sequence ID" value="CAA05104.1"/>
    <property type="molecule type" value="Genomic_DNA"/>
</dbReference>
<dbReference type="EMBL" id="FQ670179">
    <property type="protein sequence ID" value="CBY83343.1"/>
    <property type="molecule type" value="Genomic_DNA"/>
</dbReference>
<dbReference type="PIR" id="T47269">
    <property type="entry name" value="T47269"/>
</dbReference>
<dbReference type="RefSeq" id="WP_013469707.1">
    <property type="nucleotide sequence ID" value="NC_014810.2"/>
</dbReference>
<dbReference type="SMR" id="O32619"/>
<dbReference type="STRING" id="936155.HFELIS_12590"/>
<dbReference type="GeneID" id="36134482"/>
<dbReference type="KEGG" id="hfe:HFELIS_12590"/>
<dbReference type="eggNOG" id="COG2217">
    <property type="taxonomic scope" value="Bacteria"/>
</dbReference>
<dbReference type="HOGENOM" id="CLU_001771_0_3_7"/>
<dbReference type="OrthoDB" id="2490525at2"/>
<dbReference type="Proteomes" id="UP000007934">
    <property type="component" value="Chromosome"/>
</dbReference>
<dbReference type="GO" id="GO:0005886">
    <property type="term" value="C:plasma membrane"/>
    <property type="evidence" value="ECO:0007669"/>
    <property type="project" value="UniProtKB-SubCell"/>
</dbReference>
<dbReference type="GO" id="GO:0005524">
    <property type="term" value="F:ATP binding"/>
    <property type="evidence" value="ECO:0007669"/>
    <property type="project" value="UniProtKB-KW"/>
</dbReference>
<dbReference type="GO" id="GO:0016887">
    <property type="term" value="F:ATP hydrolysis activity"/>
    <property type="evidence" value="ECO:0007669"/>
    <property type="project" value="InterPro"/>
</dbReference>
<dbReference type="GO" id="GO:0005507">
    <property type="term" value="F:copper ion binding"/>
    <property type="evidence" value="ECO:0007669"/>
    <property type="project" value="TreeGrafter"/>
</dbReference>
<dbReference type="GO" id="GO:0043682">
    <property type="term" value="F:P-type divalent copper transporter activity"/>
    <property type="evidence" value="ECO:0007669"/>
    <property type="project" value="TreeGrafter"/>
</dbReference>
<dbReference type="GO" id="GO:0140581">
    <property type="term" value="F:P-type monovalent copper transporter activity"/>
    <property type="evidence" value="ECO:0007669"/>
    <property type="project" value="UniProtKB-EC"/>
</dbReference>
<dbReference type="GO" id="GO:0055070">
    <property type="term" value="P:copper ion homeostasis"/>
    <property type="evidence" value="ECO:0007669"/>
    <property type="project" value="TreeGrafter"/>
</dbReference>
<dbReference type="CDD" id="cd00371">
    <property type="entry name" value="HMA"/>
    <property type="match status" value="1"/>
</dbReference>
<dbReference type="CDD" id="cd02094">
    <property type="entry name" value="P-type_ATPase_Cu-like"/>
    <property type="match status" value="1"/>
</dbReference>
<dbReference type="FunFam" id="3.30.70.100:FF:000001">
    <property type="entry name" value="ATPase copper transporting beta"/>
    <property type="match status" value="1"/>
</dbReference>
<dbReference type="FunFam" id="2.70.150.10:FF:000002">
    <property type="entry name" value="Copper-transporting ATPase 1, putative"/>
    <property type="match status" value="1"/>
</dbReference>
<dbReference type="Gene3D" id="3.30.70.100">
    <property type="match status" value="1"/>
</dbReference>
<dbReference type="Gene3D" id="3.40.1110.10">
    <property type="entry name" value="Calcium-transporting ATPase, cytoplasmic domain N"/>
    <property type="match status" value="1"/>
</dbReference>
<dbReference type="Gene3D" id="2.70.150.10">
    <property type="entry name" value="Calcium-transporting ATPase, cytoplasmic transduction domain A"/>
    <property type="match status" value="1"/>
</dbReference>
<dbReference type="Gene3D" id="3.40.50.1000">
    <property type="entry name" value="HAD superfamily/HAD-like"/>
    <property type="match status" value="1"/>
</dbReference>
<dbReference type="InterPro" id="IPR023299">
    <property type="entry name" value="ATPase_P-typ_cyto_dom_N"/>
</dbReference>
<dbReference type="InterPro" id="IPR018303">
    <property type="entry name" value="ATPase_P-typ_P_site"/>
</dbReference>
<dbReference type="InterPro" id="IPR023298">
    <property type="entry name" value="ATPase_P-typ_TM_dom_sf"/>
</dbReference>
<dbReference type="InterPro" id="IPR008250">
    <property type="entry name" value="ATPase_P-typ_transduc_dom_A_sf"/>
</dbReference>
<dbReference type="InterPro" id="IPR036412">
    <property type="entry name" value="HAD-like_sf"/>
</dbReference>
<dbReference type="InterPro" id="IPR023214">
    <property type="entry name" value="HAD_sf"/>
</dbReference>
<dbReference type="InterPro" id="IPR017969">
    <property type="entry name" value="Heavy-metal-associated_CS"/>
</dbReference>
<dbReference type="InterPro" id="IPR006121">
    <property type="entry name" value="HMA_dom"/>
</dbReference>
<dbReference type="InterPro" id="IPR036163">
    <property type="entry name" value="HMA_dom_sf"/>
</dbReference>
<dbReference type="InterPro" id="IPR027256">
    <property type="entry name" value="P-typ_ATPase_IB"/>
</dbReference>
<dbReference type="InterPro" id="IPR001757">
    <property type="entry name" value="P_typ_ATPase"/>
</dbReference>
<dbReference type="NCBIfam" id="TIGR01511">
    <property type="entry name" value="ATPase-IB1_Cu"/>
    <property type="match status" value="1"/>
</dbReference>
<dbReference type="NCBIfam" id="TIGR01512">
    <property type="entry name" value="ATPase-IB2_Cd"/>
    <property type="match status" value="1"/>
</dbReference>
<dbReference type="NCBIfam" id="TIGR01525">
    <property type="entry name" value="ATPase-IB_hvy"/>
    <property type="match status" value="1"/>
</dbReference>
<dbReference type="NCBIfam" id="TIGR01494">
    <property type="entry name" value="ATPase_P-type"/>
    <property type="match status" value="1"/>
</dbReference>
<dbReference type="PANTHER" id="PTHR43520">
    <property type="entry name" value="ATP7, ISOFORM B"/>
    <property type="match status" value="1"/>
</dbReference>
<dbReference type="PANTHER" id="PTHR43520:SF8">
    <property type="entry name" value="P-TYPE CU(+) TRANSPORTER"/>
    <property type="match status" value="1"/>
</dbReference>
<dbReference type="Pfam" id="PF00122">
    <property type="entry name" value="E1-E2_ATPase"/>
    <property type="match status" value="1"/>
</dbReference>
<dbReference type="Pfam" id="PF00403">
    <property type="entry name" value="HMA"/>
    <property type="match status" value="1"/>
</dbReference>
<dbReference type="Pfam" id="PF00702">
    <property type="entry name" value="Hydrolase"/>
    <property type="match status" value="1"/>
</dbReference>
<dbReference type="PRINTS" id="PR00119">
    <property type="entry name" value="CATATPASE"/>
</dbReference>
<dbReference type="PRINTS" id="PR00943">
    <property type="entry name" value="CUATPASE"/>
</dbReference>
<dbReference type="SUPFAM" id="SSF81653">
    <property type="entry name" value="Calcium ATPase, transduction domain A"/>
    <property type="match status" value="1"/>
</dbReference>
<dbReference type="SUPFAM" id="SSF81665">
    <property type="entry name" value="Calcium ATPase, transmembrane domain M"/>
    <property type="match status" value="1"/>
</dbReference>
<dbReference type="SUPFAM" id="SSF56784">
    <property type="entry name" value="HAD-like"/>
    <property type="match status" value="1"/>
</dbReference>
<dbReference type="SUPFAM" id="SSF55008">
    <property type="entry name" value="HMA, heavy metal-associated domain"/>
    <property type="match status" value="1"/>
</dbReference>
<dbReference type="PROSITE" id="PS00154">
    <property type="entry name" value="ATPASE_E1_E2"/>
    <property type="match status" value="1"/>
</dbReference>
<dbReference type="PROSITE" id="PS01047">
    <property type="entry name" value="HMA_1"/>
    <property type="match status" value="1"/>
</dbReference>
<dbReference type="PROSITE" id="PS50846">
    <property type="entry name" value="HMA_2"/>
    <property type="match status" value="1"/>
</dbReference>
<protein>
    <recommendedName>
        <fullName>Copper-transporting ATPase</fullName>
        <ecNumber>7.2.2.8</ecNumber>
    </recommendedName>
</protein>
<sequence length="732" mass="78853">MTKAQFYIEGMTCSACSSGIERALGRKKFVQEVGVDLISKKAFVVYDENQASLEDVFKQIEKLGYQPRVATDTPNTFLNPSFLTPNVKLALVLLGTLGVLALSMFAPLLPLPSFLKNPFINGIVQLVLSLMVMHMGRNFYVHGFKALWARQPNMDSLIALGTSAALLYSLVLLFRAYTHAPIEGYYFESVCVILLFVMAGKRVEENSKDKALEAMQSLMRHQSLNALKIENGQSVEVPLESLQKGDILQILPGSYIPVDGVLFKGEAEVDESMLSGESLPVYKKEGMDLFAGTLNTTTTFQMRATHTKAQSTLAKILTLIAKAQGSKAPIARLADKVAGVFVPIVIGIASIAFLVWLVLGDFTRALEVFIAILVISCPCALGLATPMALLVAQKEASLLGLFFKDAVSLEKAKNVNHVIFDKTGTLTLGTPLVQEVRVAEGVDRLELLTLCASLEAQSEHVIAKGIVAHAKEQGIALQEVQEVQAKPGFGIKGVVGDQIIKAGNLEFFNLPNPFGTLEGIQVFVGTETQILGVVVLADSLKEGSKEAISELKALGVKTTLLSGDNLENVRALATQLGIQDYHAQAKPEDKLKVIQELKAQGKVVMMVGDGVNDAPSLALSDVGVVMAKGSDASLEVADVVSFNNDIQSVVSAMKLSALTIANIKQNLFWAFCYNSIAIPLACGVAYKLGIMFNPMLASLAMSLSSVSVVLNAQRLRGAHFKIRGSHENRHSS</sequence>
<accession>O32619</accession>
<accession>E7A9G6</accession>
<name>COPA_HELFC</name>
<gene>
    <name type="primary">copA</name>
    <name type="ordered locus">Hfelis_12590</name>
</gene>
<organism>
    <name type="scientific">Helicobacter felis (strain ATCC 49179 / CCUG 28539 / NCTC 12436 / CS1)</name>
    <dbReference type="NCBI Taxonomy" id="936155"/>
    <lineage>
        <taxon>Bacteria</taxon>
        <taxon>Pseudomonadati</taxon>
        <taxon>Campylobacterota</taxon>
        <taxon>Epsilonproteobacteria</taxon>
        <taxon>Campylobacterales</taxon>
        <taxon>Helicobacteraceae</taxon>
        <taxon>Helicobacter</taxon>
    </lineage>
</organism>
<evidence type="ECO:0000250" key="1"/>
<evidence type="ECO:0000255" key="2"/>
<evidence type="ECO:0000255" key="3">
    <source>
        <dbReference type="PROSITE-ProRule" id="PRU00280"/>
    </source>
</evidence>
<evidence type="ECO:0000305" key="4"/>